<organismHost>
    <name type="scientific">Canis lupus familiaris</name>
    <name type="common">Dog</name>
    <name type="synonym">Canis familiaris</name>
    <dbReference type="NCBI Taxonomy" id="9615"/>
</organismHost>
<organismHost>
    <name type="scientific">Homo sapiens</name>
    <name type="common">Human</name>
    <dbReference type="NCBI Taxonomy" id="9606"/>
</organismHost>
<accession>P04850</accession>
<dbReference type="EC" id="3.2.1.18" evidence="3"/>
<dbReference type="EMBL" id="S76876">
    <property type="protein sequence ID" value="AAB21114.1"/>
    <property type="molecule type" value="mRNA"/>
</dbReference>
<dbReference type="EMBL" id="K02870">
    <property type="protein sequence ID" value="AAA47878.1"/>
    <property type="molecule type" value="Genomic_RNA"/>
</dbReference>
<dbReference type="EMBL" id="AF052755">
    <property type="protein sequence ID" value="AAC95517.1"/>
    <property type="molecule type" value="Genomic_RNA"/>
</dbReference>
<dbReference type="PIR" id="A00879">
    <property type="entry name" value="HNNZSV"/>
</dbReference>
<dbReference type="PDB" id="1Z4V">
    <property type="method" value="X-ray"/>
    <property type="resolution" value="2.30 A"/>
    <property type="chains" value="A=37-565"/>
</dbReference>
<dbReference type="PDB" id="1Z4W">
    <property type="method" value="X-ray"/>
    <property type="resolution" value="2.70 A"/>
    <property type="chains" value="A=37-565"/>
</dbReference>
<dbReference type="PDB" id="1Z4X">
    <property type="method" value="X-ray"/>
    <property type="resolution" value="2.50 A"/>
    <property type="chains" value="A=37-565"/>
</dbReference>
<dbReference type="PDB" id="1Z4Y">
    <property type="method" value="X-ray"/>
    <property type="resolution" value="2.60 A"/>
    <property type="chains" value="A=37-565"/>
</dbReference>
<dbReference type="PDB" id="1Z4Z">
    <property type="method" value="X-ray"/>
    <property type="resolution" value="2.50 A"/>
    <property type="chains" value="A=37-565"/>
</dbReference>
<dbReference type="PDB" id="1Z50">
    <property type="method" value="X-ray"/>
    <property type="resolution" value="2.80 A"/>
    <property type="chains" value="A=37-565"/>
</dbReference>
<dbReference type="PDB" id="3TSI">
    <property type="method" value="X-ray"/>
    <property type="resolution" value="2.65 A"/>
    <property type="chains" value="A/B/C/D=56-117"/>
</dbReference>
<dbReference type="PDB" id="4JF7">
    <property type="method" value="X-ray"/>
    <property type="resolution" value="2.50 A"/>
    <property type="chains" value="A/B/C/D=56-565"/>
</dbReference>
<dbReference type="PDBsum" id="1Z4V"/>
<dbReference type="PDBsum" id="1Z4W"/>
<dbReference type="PDBsum" id="1Z4X"/>
<dbReference type="PDBsum" id="1Z4Y"/>
<dbReference type="PDBsum" id="1Z4Z"/>
<dbReference type="PDBsum" id="1Z50"/>
<dbReference type="PDBsum" id="3TSI"/>
<dbReference type="PDBsum" id="4JF7"/>
<dbReference type="SMR" id="P04850"/>
<dbReference type="DIP" id="DIP-48442N"/>
<dbReference type="CAZy" id="GH83">
    <property type="family name" value="Glycoside Hydrolase Family 83"/>
</dbReference>
<dbReference type="GlyCosmos" id="P04850">
    <property type="glycosylation" value="3 sites, No reported glycans"/>
</dbReference>
<dbReference type="KEGG" id="vg:3160803"/>
<dbReference type="EvolutionaryTrace" id="P04850"/>
<dbReference type="Proteomes" id="UP000007232">
    <property type="component" value="Segment"/>
</dbReference>
<dbReference type="GO" id="GO:0020002">
    <property type="term" value="C:host cell plasma membrane"/>
    <property type="evidence" value="ECO:0007669"/>
    <property type="project" value="UniProtKB-SubCell"/>
</dbReference>
<dbReference type="GO" id="GO:0016020">
    <property type="term" value="C:membrane"/>
    <property type="evidence" value="ECO:0007669"/>
    <property type="project" value="UniProtKB-KW"/>
</dbReference>
<dbReference type="GO" id="GO:0019031">
    <property type="term" value="C:viral envelope"/>
    <property type="evidence" value="ECO:0007669"/>
    <property type="project" value="UniProtKB-KW"/>
</dbReference>
<dbReference type="GO" id="GO:0055036">
    <property type="term" value="C:virion membrane"/>
    <property type="evidence" value="ECO:0007669"/>
    <property type="project" value="UniProtKB-SubCell"/>
</dbReference>
<dbReference type="GO" id="GO:0004308">
    <property type="term" value="F:exo-alpha-sialidase activity"/>
    <property type="evidence" value="ECO:0007669"/>
    <property type="project" value="UniProtKB-EC"/>
</dbReference>
<dbReference type="GO" id="GO:0046789">
    <property type="term" value="F:host cell surface receptor binding"/>
    <property type="evidence" value="ECO:0007669"/>
    <property type="project" value="InterPro"/>
</dbReference>
<dbReference type="GO" id="GO:0042802">
    <property type="term" value="F:identical protein binding"/>
    <property type="evidence" value="ECO:0000353"/>
    <property type="project" value="IntAct"/>
</dbReference>
<dbReference type="GO" id="GO:0046718">
    <property type="term" value="P:symbiont entry into host cell"/>
    <property type="evidence" value="ECO:0007669"/>
    <property type="project" value="UniProtKB-KW"/>
</dbReference>
<dbReference type="GO" id="GO:0046761">
    <property type="term" value="P:viral budding from plasma membrane"/>
    <property type="evidence" value="ECO:0000314"/>
    <property type="project" value="UniProtKB"/>
</dbReference>
<dbReference type="GO" id="GO:0019062">
    <property type="term" value="P:virion attachment to host cell"/>
    <property type="evidence" value="ECO:0007669"/>
    <property type="project" value="UniProtKB-KW"/>
</dbReference>
<dbReference type="CDD" id="cd15469">
    <property type="entry name" value="HN"/>
    <property type="match status" value="1"/>
</dbReference>
<dbReference type="FunFam" id="2.120.10.10:FF:000004">
    <property type="entry name" value="Hemagglutinin-neuraminidase"/>
    <property type="match status" value="1"/>
</dbReference>
<dbReference type="Gene3D" id="1.20.5.110">
    <property type="match status" value="1"/>
</dbReference>
<dbReference type="Gene3D" id="2.120.10.10">
    <property type="match status" value="1"/>
</dbReference>
<dbReference type="InterPro" id="IPR016285">
    <property type="entry name" value="Hemagglutn-neuramid"/>
</dbReference>
<dbReference type="InterPro" id="IPR000665">
    <property type="entry name" value="Hemagglutn/HN"/>
</dbReference>
<dbReference type="InterPro" id="IPR036278">
    <property type="entry name" value="Sialidase_sf"/>
</dbReference>
<dbReference type="Pfam" id="PF00423">
    <property type="entry name" value="HN"/>
    <property type="match status" value="1"/>
</dbReference>
<dbReference type="PIRSF" id="PIRSF001072">
    <property type="entry name" value="Hemagglut-neuramid_paramyxoV"/>
    <property type="match status" value="1"/>
</dbReference>
<dbReference type="SUPFAM" id="SSF50939">
    <property type="entry name" value="Sialidases"/>
    <property type="match status" value="1"/>
</dbReference>
<proteinExistence type="evidence at protein level"/>
<sequence>MVAEDAPVRATCRVLFRTTTLIFLCTLLALSISILYESLITQKQIMSQAGSTGSNSGLGSITDLLNNILSVANQIIYNSAVALPLQLDTLESTLLTAIKSLQTSDKLEQNCSWSAALINDNRYINGINQFYFSIAEGRNLTLGPLLNMPSFIPTATTPEGCTRIPSFSLTKTHWCYTHNVILNGCQDHVSSNQFVSMGIIEPTSAGFPFFRTLKTLYLSDGVNRKSCSISTVPGGCMMYCFVSTQPERDDYFSAAPPEQRIIIMYYNDTIVERIINPPGVLDVWATLNPGTGSGVYYLGWVLFPIYGGVIKGTSLWNNQANKYFIPQMVAALCSQNQATQVQNAKSSYYSSWFGNRMIQSGILACPLRQDLTNECLVLPFSNDQVLMGAEGRLYMYGDSVYYYQRSNSWWPMTMLYKVTITFTNGQPSAISAQNVPTQQVPRPGTGDCSATNRCPGFCLTGVYADAWLLTNPSSTSTFGSEATFTGSYLNTATQRINPTMYIANNTQIISSQQFGSSGQEAAYGHTTCFRDTGSVMVYCIYIIELSSSLLGQFQIVPFIRQVTLS</sequence>
<comment type="function">
    <text evidence="1">Attaches the virus to sialic acid-containing cell receptors and thereby initiating infection. Binding of HN protein to the receptor induces a conformational change that allows the F protein to trigger virion/cell membranes fusion (By similarity).</text>
</comment>
<comment type="function">
    <text evidence="1">Neuraminidase activity ensures the efficient spread of the virus by dissociating the mature virions from the neuraminic acid containing glycoproteins.</text>
</comment>
<comment type="catalytic activity">
    <reaction evidence="3">
        <text>Hydrolysis of alpha-(2-&gt;3)-, alpha-(2-&gt;6)-, alpha-(2-&gt;8)- glycosidic linkages of terminal sialic acid residues in oligosaccharides, glycoproteins, glycolipids, colominic acid and synthetic substrates.</text>
        <dbReference type="EC" id="3.2.1.18"/>
    </reaction>
</comment>
<comment type="subunit">
    <text evidence="2 5">Homotetramer; composed of disulfide-linked homodimers (By similarity). Interacts with F protein trimer (By similarity).</text>
</comment>
<comment type="interaction">
    <interactant intactId="EBI-15552318">
        <id>P04850</id>
    </interactant>
    <interactant intactId="EBI-15552318">
        <id>P04850</id>
        <label>HN</label>
    </interactant>
    <organismsDiffer>false</organismsDiffer>
    <experiments>4</experiments>
</comment>
<comment type="subcellular location">
    <subcellularLocation>
        <location evidence="7">Virion membrane</location>
        <topology evidence="7">Single-pass type II membrane protein</topology>
    </subcellularLocation>
    <subcellularLocation>
        <location evidence="7">Host cell membrane</location>
        <topology evidence="7">Single-pass type II membrane protein</topology>
    </subcellularLocation>
</comment>
<comment type="domain">
    <text evidence="5">The C-terminus (head domain) is involved in binding the cellular receptor.</text>
</comment>
<comment type="similarity">
    <text evidence="7">Belongs to the paramyxoviruses hemagglutinin-neuraminidase family.</text>
</comment>
<keyword id="KW-0002">3D-structure</keyword>
<keyword id="KW-1015">Disulfide bond</keyword>
<keyword id="KW-0325">Glycoprotein</keyword>
<keyword id="KW-0348">Hemagglutinin</keyword>
<keyword id="KW-1032">Host cell membrane</keyword>
<keyword id="KW-1043">Host membrane</keyword>
<keyword id="KW-0945">Host-virus interaction</keyword>
<keyword id="KW-0378">Hydrolase</keyword>
<keyword id="KW-0472">Membrane</keyword>
<keyword id="KW-1185">Reference proteome</keyword>
<keyword id="KW-0735">Signal-anchor</keyword>
<keyword id="KW-0812">Transmembrane</keyword>
<keyword id="KW-1133">Transmembrane helix</keyword>
<keyword id="KW-1161">Viral attachment to host cell</keyword>
<keyword id="KW-0261">Viral envelope protein</keyword>
<keyword id="KW-0946">Virion</keyword>
<keyword id="KW-1160">Virus entry into host cell</keyword>
<feature type="chain" id="PRO_0000142641" description="Hemagglutinin-neuraminidase">
    <location>
        <begin position="1"/>
        <end position="565"/>
    </location>
</feature>
<feature type="topological domain" description="Intravirion" evidence="6">
    <location>
        <begin position="1"/>
        <end position="19"/>
    </location>
</feature>
<feature type="transmembrane region" description="Helical" evidence="6">
    <location>
        <begin position="20"/>
        <end position="40"/>
    </location>
</feature>
<feature type="topological domain" description="Virion surface" evidence="6">
    <location>
        <begin position="41"/>
        <end position="565"/>
    </location>
</feature>
<feature type="region of interest" description="Involved in neuraminidase activity" evidence="4">
    <location>
        <begin position="223"/>
        <end position="228"/>
    </location>
</feature>
<feature type="glycosylation site" description="N-linked (GlcNAc...) asparagine; by host">
    <location>
        <position position="139"/>
    </location>
</feature>
<feature type="glycosylation site" description="N-linked (GlcNAc...) asparagine; by host">
    <location>
        <position position="267"/>
    </location>
</feature>
<feature type="glycosylation site" description="N-linked (GlcNAc...) asparagine; by host">
    <location>
        <position position="504"/>
    </location>
</feature>
<feature type="disulfide bond">
    <location>
        <begin position="161"/>
        <end position="185"/>
    </location>
</feature>
<feature type="disulfide bond">
    <location>
        <begin position="175"/>
        <end position="236"/>
    </location>
</feature>
<feature type="disulfide bond">
    <location>
        <begin position="227"/>
        <end position="240"/>
    </location>
</feature>
<feature type="disulfide bond" evidence="5">
    <location>
        <begin position="333"/>
        <end position="454"/>
    </location>
</feature>
<feature type="disulfide bond">
    <location>
        <begin position="365"/>
        <end position="375"/>
    </location>
</feature>
<feature type="disulfide bond">
    <location>
        <begin position="448"/>
        <end position="458"/>
    </location>
</feature>
<feature type="disulfide bond">
    <location>
        <begin position="528"/>
        <end position="539"/>
    </location>
</feature>
<feature type="helix" evidence="9">
    <location>
        <begin position="66"/>
        <end position="69"/>
    </location>
</feature>
<feature type="helix" evidence="9">
    <location>
        <begin position="72"/>
        <end position="80"/>
    </location>
</feature>
<feature type="helix" evidence="9">
    <location>
        <begin position="82"/>
        <end position="99"/>
    </location>
</feature>
<feature type="helix" evidence="9">
    <location>
        <begin position="103"/>
        <end position="106"/>
    </location>
</feature>
<feature type="strand" evidence="9">
    <location>
        <begin position="109"/>
        <end position="113"/>
    </location>
</feature>
<feature type="turn" evidence="8">
    <location>
        <begin position="121"/>
        <end position="125"/>
    </location>
</feature>
<feature type="strand" evidence="8">
    <location>
        <begin position="126"/>
        <end position="129"/>
    </location>
</feature>
<feature type="helix" evidence="8">
    <location>
        <begin position="134"/>
        <end position="137"/>
    </location>
</feature>
<feature type="strand" evidence="8">
    <location>
        <begin position="140"/>
        <end position="145"/>
    </location>
</feature>
<feature type="strand" evidence="8">
    <location>
        <begin position="156"/>
        <end position="159"/>
    </location>
</feature>
<feature type="strand" evidence="8">
    <location>
        <begin position="161"/>
        <end position="169"/>
    </location>
</feature>
<feature type="strand" evidence="8">
    <location>
        <begin position="174"/>
        <end position="184"/>
    </location>
</feature>
<feature type="strand" evidence="8">
    <location>
        <begin position="192"/>
        <end position="202"/>
    </location>
</feature>
<feature type="strand" evidence="8">
    <location>
        <begin position="206"/>
        <end position="218"/>
    </location>
</feature>
<feature type="strand" evidence="8">
    <location>
        <begin position="224"/>
        <end position="232"/>
    </location>
</feature>
<feature type="strand" evidence="8">
    <location>
        <begin position="235"/>
        <end position="242"/>
    </location>
</feature>
<feature type="helix" evidence="8">
    <location>
        <begin position="247"/>
        <end position="252"/>
    </location>
</feature>
<feature type="strand" evidence="8">
    <location>
        <begin position="253"/>
        <end position="255"/>
    </location>
</feature>
<feature type="strand" evidence="8">
    <location>
        <begin position="258"/>
        <end position="265"/>
    </location>
</feature>
<feature type="strand" evidence="8">
    <location>
        <begin position="270"/>
        <end position="275"/>
    </location>
</feature>
<feature type="turn" evidence="8">
    <location>
        <begin position="281"/>
        <end position="283"/>
    </location>
</feature>
<feature type="strand" evidence="8">
    <location>
        <begin position="284"/>
        <end position="289"/>
    </location>
</feature>
<feature type="strand" evidence="8">
    <location>
        <begin position="295"/>
        <end position="297"/>
    </location>
</feature>
<feature type="strand" evidence="8">
    <location>
        <begin position="300"/>
        <end position="309"/>
    </location>
</feature>
<feature type="helix" evidence="8">
    <location>
        <begin position="314"/>
        <end position="319"/>
    </location>
</feature>
<feature type="turn" evidence="8">
    <location>
        <begin position="330"/>
        <end position="332"/>
    </location>
</feature>
<feature type="helix" evidence="8">
    <location>
        <begin position="337"/>
        <end position="346"/>
    </location>
</feature>
<feature type="turn" evidence="8">
    <location>
        <begin position="351"/>
        <end position="355"/>
    </location>
</feature>
<feature type="strand" evidence="8">
    <location>
        <begin position="356"/>
        <end position="367"/>
    </location>
</feature>
<feature type="strand" evidence="8">
    <location>
        <begin position="376"/>
        <end position="379"/>
    </location>
</feature>
<feature type="turn" evidence="8">
    <location>
        <begin position="382"/>
        <end position="384"/>
    </location>
</feature>
<feature type="strand" evidence="8">
    <location>
        <begin position="391"/>
        <end position="396"/>
    </location>
</feature>
<feature type="strand" evidence="8">
    <location>
        <begin position="399"/>
        <end position="404"/>
    </location>
</feature>
<feature type="strand" evidence="8">
    <location>
        <begin position="414"/>
        <end position="434"/>
    </location>
</feature>
<feature type="helix" evidence="8">
    <location>
        <begin position="446"/>
        <end position="448"/>
    </location>
</feature>
<feature type="strand" evidence="8">
    <location>
        <begin position="466"/>
        <end position="470"/>
    </location>
</feature>
<feature type="helix" evidence="8">
    <location>
        <begin position="472"/>
        <end position="474"/>
    </location>
</feature>
<feature type="strand" evidence="8">
    <location>
        <begin position="475"/>
        <end position="477"/>
    </location>
</feature>
<feature type="turn" evidence="8">
    <location>
        <begin position="478"/>
        <end position="481"/>
    </location>
</feature>
<feature type="strand" evidence="8">
    <location>
        <begin position="483"/>
        <end position="489"/>
    </location>
</feature>
<feature type="strand" evidence="8">
    <location>
        <begin position="491"/>
        <end position="496"/>
    </location>
</feature>
<feature type="strand" evidence="8">
    <location>
        <begin position="498"/>
        <end position="506"/>
    </location>
</feature>
<feature type="strand" evidence="8">
    <location>
        <begin position="508"/>
        <end position="513"/>
    </location>
</feature>
<feature type="strand" evidence="8">
    <location>
        <begin position="520"/>
        <end position="531"/>
    </location>
</feature>
<feature type="turn" evidence="8">
    <location>
        <begin position="532"/>
        <end position="535"/>
    </location>
</feature>
<feature type="strand" evidence="8">
    <location>
        <begin position="536"/>
        <end position="546"/>
    </location>
</feature>
<feature type="strand" evidence="8">
    <location>
        <begin position="548"/>
        <end position="564"/>
    </location>
</feature>
<reference key="1">
    <citation type="journal article" date="1985" name="J. Virol.">
        <title>Hemagglutinin-neuraminidase protein of the paramyxovirus simian virus 5: nucleotide sequence of the mRNA predicts an N-terminal membrane anchor.</title>
        <authorList>
            <person name="Hiebert S.W."/>
            <person name="Paterson R.G."/>
            <person name="Lamb R.A."/>
        </authorList>
    </citation>
    <scope>NUCLEOTIDE SEQUENCE [MRNA]</scope>
</reference>
<reference key="2">
    <citation type="journal article" date="1991" name="J. Gen. Virol.">
        <title>Sequence comparison between the haemagglutinin-neuraminidase genes of simian, canine and human isolates of simian virus 5.</title>
        <authorList>
            <person name="Baty D.U."/>
            <person name="Southern J.A."/>
            <person name="Randall R.E."/>
        </authorList>
    </citation>
    <scope>NUCLEOTIDE SEQUENCE [GENOMIC RNA]</scope>
</reference>
<reference key="3">
    <citation type="journal article" date="2005" name="Structure">
        <title>Structural studies of the parainfluenza virus 5 hemagglutinin-neuraminidase tetramer in complex with its receptor, sialyllactose.</title>
        <authorList>
            <person name="Yuan P."/>
            <person name="Thompson T.B."/>
            <person name="Wurzburg B.A."/>
            <person name="Paterson R.G."/>
            <person name="Lamb R.A."/>
            <person name="Jardetzky T.S."/>
        </authorList>
    </citation>
    <scope>X-RAY CRYSTALLOGRAPHY (2.3 ANGSTROMS) OF 37-565</scope>
</reference>
<name>HN_PIV5</name>
<protein>
    <recommendedName>
        <fullName>Hemagglutinin-neuraminidase</fullName>
        <ecNumber evidence="3">3.2.1.18</ecNumber>
    </recommendedName>
</protein>
<organism>
    <name type="scientific">Parainfluenza virus 5 (strain W3)</name>
    <name type="common">PIV5</name>
    <name type="synonym">Simian virus 5</name>
    <dbReference type="NCBI Taxonomy" id="11208"/>
    <lineage>
        <taxon>Viruses</taxon>
        <taxon>Riboviria</taxon>
        <taxon>Orthornavirae</taxon>
        <taxon>Negarnaviricota</taxon>
        <taxon>Haploviricotina</taxon>
        <taxon>Monjiviricetes</taxon>
        <taxon>Mononegavirales</taxon>
        <taxon>Paramyxoviridae</taxon>
        <taxon>Rubulavirinae</taxon>
        <taxon>Orthorubulavirus</taxon>
        <taxon>Orthorubulavirus mammalis</taxon>
        <taxon>Mammalian orthorubulavirus 5</taxon>
    </lineage>
</organism>
<gene>
    <name type="primary">HN</name>
</gene>
<evidence type="ECO:0000250" key="1"/>
<evidence type="ECO:0000250" key="2">
    <source>
        <dbReference type="UniProtKB" id="P04853"/>
    </source>
</evidence>
<evidence type="ECO:0000250" key="3">
    <source>
        <dbReference type="UniProtKB" id="P25465"/>
    </source>
</evidence>
<evidence type="ECO:0000250" key="4">
    <source>
        <dbReference type="UniProtKB" id="Q91UL0"/>
    </source>
</evidence>
<evidence type="ECO:0000250" key="5">
    <source>
        <dbReference type="UniProtKB" id="Q9WAF5"/>
    </source>
</evidence>
<evidence type="ECO:0000255" key="6"/>
<evidence type="ECO:0000305" key="7"/>
<evidence type="ECO:0007829" key="8">
    <source>
        <dbReference type="PDB" id="1Z4V"/>
    </source>
</evidence>
<evidence type="ECO:0007829" key="9">
    <source>
        <dbReference type="PDB" id="4JF7"/>
    </source>
</evidence>